<sequence>MQCIETNNLQQLLEQVKPYTKKGKLATYIPELGNANPDDLGIAIFHKETEYIHAGNSQTLFTLQSISKVITLALALLDRGEEYVFSKVGMEPTGDPFNSIIKLETTSPSKPLNPMINAGALAITSMLAGKDNEEKMERILHFVREITDNPTINYSSKVANSELETAYLNRSLCYYMKQNGIIDCDIEELMDLYTRQCAVEVNCIDLARIGLIFAMDGYDPYKKKQIIPKHITKICKTFMVTCGMYNESGEFAIRVGIPAKSGVAGGIFGCVKGEMGIGIFGPALDANGNSIAGFKILELLSAQEGWSIF</sequence>
<accession>Q73E07</accession>
<gene>
    <name evidence="1" type="primary">glsA</name>
    <name type="ordered locus">BCE_0553</name>
</gene>
<name>GLSA_BACC1</name>
<protein>
    <recommendedName>
        <fullName evidence="1">Glutaminase</fullName>
        <ecNumber evidence="1">3.5.1.2</ecNumber>
    </recommendedName>
</protein>
<reference key="1">
    <citation type="journal article" date="2004" name="Nucleic Acids Res.">
        <title>The genome sequence of Bacillus cereus ATCC 10987 reveals metabolic adaptations and a large plasmid related to Bacillus anthracis pXO1.</title>
        <authorList>
            <person name="Rasko D.A."/>
            <person name="Ravel J."/>
            <person name="Oekstad O.A."/>
            <person name="Helgason E."/>
            <person name="Cer R.Z."/>
            <person name="Jiang L."/>
            <person name="Shores K.A."/>
            <person name="Fouts D.E."/>
            <person name="Tourasse N.J."/>
            <person name="Angiuoli S.V."/>
            <person name="Kolonay J.F."/>
            <person name="Nelson W.C."/>
            <person name="Kolstoe A.-B."/>
            <person name="Fraser C.M."/>
            <person name="Read T.D."/>
        </authorList>
    </citation>
    <scope>NUCLEOTIDE SEQUENCE [LARGE SCALE GENOMIC DNA]</scope>
    <source>
        <strain>ATCC 10987 / NRS 248</strain>
    </source>
</reference>
<comment type="catalytic activity">
    <reaction evidence="1">
        <text>L-glutamine + H2O = L-glutamate + NH4(+)</text>
        <dbReference type="Rhea" id="RHEA:15889"/>
        <dbReference type="ChEBI" id="CHEBI:15377"/>
        <dbReference type="ChEBI" id="CHEBI:28938"/>
        <dbReference type="ChEBI" id="CHEBI:29985"/>
        <dbReference type="ChEBI" id="CHEBI:58359"/>
        <dbReference type="EC" id="3.5.1.2"/>
    </reaction>
</comment>
<comment type="subunit">
    <text evidence="1">Homotetramer.</text>
</comment>
<comment type="similarity">
    <text evidence="1">Belongs to the glutaminase family.</text>
</comment>
<evidence type="ECO:0000255" key="1">
    <source>
        <dbReference type="HAMAP-Rule" id="MF_00313"/>
    </source>
</evidence>
<organism>
    <name type="scientific">Bacillus cereus (strain ATCC 10987 / NRS 248)</name>
    <dbReference type="NCBI Taxonomy" id="222523"/>
    <lineage>
        <taxon>Bacteria</taxon>
        <taxon>Bacillati</taxon>
        <taxon>Bacillota</taxon>
        <taxon>Bacilli</taxon>
        <taxon>Bacillales</taxon>
        <taxon>Bacillaceae</taxon>
        <taxon>Bacillus</taxon>
        <taxon>Bacillus cereus group</taxon>
    </lineage>
</organism>
<dbReference type="EC" id="3.5.1.2" evidence="1"/>
<dbReference type="EMBL" id="AE017194">
    <property type="protein sequence ID" value="AAS39488.1"/>
    <property type="molecule type" value="Genomic_DNA"/>
</dbReference>
<dbReference type="SMR" id="Q73E07"/>
<dbReference type="KEGG" id="bca:BCE_0553"/>
<dbReference type="HOGENOM" id="CLU_027932_1_0_9"/>
<dbReference type="Proteomes" id="UP000002527">
    <property type="component" value="Chromosome"/>
</dbReference>
<dbReference type="GO" id="GO:0004359">
    <property type="term" value="F:glutaminase activity"/>
    <property type="evidence" value="ECO:0007669"/>
    <property type="project" value="UniProtKB-UniRule"/>
</dbReference>
<dbReference type="GO" id="GO:0006537">
    <property type="term" value="P:glutamate biosynthetic process"/>
    <property type="evidence" value="ECO:0007669"/>
    <property type="project" value="TreeGrafter"/>
</dbReference>
<dbReference type="GO" id="GO:0006543">
    <property type="term" value="P:glutamine catabolic process"/>
    <property type="evidence" value="ECO:0007669"/>
    <property type="project" value="TreeGrafter"/>
</dbReference>
<dbReference type="FunFam" id="1.10.1500.10:FF:000001">
    <property type="entry name" value="Glutaminase"/>
    <property type="match status" value="1"/>
</dbReference>
<dbReference type="FunFam" id="3.40.710.10:FF:000005">
    <property type="entry name" value="Glutaminase"/>
    <property type="match status" value="1"/>
</dbReference>
<dbReference type="Gene3D" id="1.10.1500.10">
    <property type="match status" value="1"/>
</dbReference>
<dbReference type="Gene3D" id="3.40.710.10">
    <property type="entry name" value="DD-peptidase/beta-lactamase superfamily"/>
    <property type="match status" value="1"/>
</dbReference>
<dbReference type="HAMAP" id="MF_00313">
    <property type="entry name" value="Glutaminase"/>
    <property type="match status" value="1"/>
</dbReference>
<dbReference type="InterPro" id="IPR012338">
    <property type="entry name" value="Beta-lactam/transpept-like"/>
</dbReference>
<dbReference type="InterPro" id="IPR015868">
    <property type="entry name" value="Glutaminase"/>
</dbReference>
<dbReference type="NCBIfam" id="TIGR03814">
    <property type="entry name" value="Gln_ase"/>
    <property type="match status" value="1"/>
</dbReference>
<dbReference type="PANTHER" id="PTHR12544">
    <property type="entry name" value="GLUTAMINASE"/>
    <property type="match status" value="1"/>
</dbReference>
<dbReference type="PANTHER" id="PTHR12544:SF29">
    <property type="entry name" value="GLUTAMINASE"/>
    <property type="match status" value="1"/>
</dbReference>
<dbReference type="Pfam" id="PF04960">
    <property type="entry name" value="Glutaminase"/>
    <property type="match status" value="1"/>
</dbReference>
<dbReference type="SUPFAM" id="SSF56601">
    <property type="entry name" value="beta-lactamase/transpeptidase-like"/>
    <property type="match status" value="1"/>
</dbReference>
<feature type="chain" id="PRO_1000048322" description="Glutaminase">
    <location>
        <begin position="1"/>
        <end position="309"/>
    </location>
</feature>
<feature type="binding site" evidence="1">
    <location>
        <position position="65"/>
    </location>
    <ligand>
        <name>substrate</name>
    </ligand>
</feature>
<feature type="binding site" evidence="1">
    <location>
        <position position="117"/>
    </location>
    <ligand>
        <name>substrate</name>
    </ligand>
</feature>
<feature type="binding site" evidence="1">
    <location>
        <position position="162"/>
    </location>
    <ligand>
        <name>substrate</name>
    </ligand>
</feature>
<feature type="binding site" evidence="1">
    <location>
        <position position="169"/>
    </location>
    <ligand>
        <name>substrate</name>
    </ligand>
</feature>
<feature type="binding site" evidence="1">
    <location>
        <position position="193"/>
    </location>
    <ligand>
        <name>substrate</name>
    </ligand>
</feature>
<feature type="binding site" evidence="1">
    <location>
        <position position="245"/>
    </location>
    <ligand>
        <name>substrate</name>
    </ligand>
</feature>
<feature type="binding site" evidence="1">
    <location>
        <position position="263"/>
    </location>
    <ligand>
        <name>substrate</name>
    </ligand>
</feature>
<proteinExistence type="inferred from homology"/>
<keyword id="KW-0378">Hydrolase</keyword>